<name>DDL_ACICJ</name>
<gene>
    <name evidence="2" type="primary">ddl</name>
    <name type="ordered locus">Acry_0066</name>
</gene>
<keyword id="KW-0067">ATP-binding</keyword>
<keyword id="KW-0133">Cell shape</keyword>
<keyword id="KW-0961">Cell wall biogenesis/degradation</keyword>
<keyword id="KW-0963">Cytoplasm</keyword>
<keyword id="KW-0436">Ligase</keyword>
<keyword id="KW-0460">Magnesium</keyword>
<keyword id="KW-0464">Manganese</keyword>
<keyword id="KW-0479">Metal-binding</keyword>
<keyword id="KW-0547">Nucleotide-binding</keyword>
<keyword id="KW-0573">Peptidoglycan synthesis</keyword>
<keyword id="KW-1185">Reference proteome</keyword>
<organism>
    <name type="scientific">Acidiphilium cryptum (strain JF-5)</name>
    <dbReference type="NCBI Taxonomy" id="349163"/>
    <lineage>
        <taxon>Bacteria</taxon>
        <taxon>Pseudomonadati</taxon>
        <taxon>Pseudomonadota</taxon>
        <taxon>Alphaproteobacteria</taxon>
        <taxon>Acetobacterales</taxon>
        <taxon>Acidocellaceae</taxon>
        <taxon>Acidiphilium</taxon>
    </lineage>
</organism>
<accession>A5FUL3</accession>
<comment type="function">
    <text evidence="2">Cell wall formation.</text>
</comment>
<comment type="catalytic activity">
    <reaction evidence="2">
        <text>2 D-alanine + ATP = D-alanyl-D-alanine + ADP + phosphate + H(+)</text>
        <dbReference type="Rhea" id="RHEA:11224"/>
        <dbReference type="ChEBI" id="CHEBI:15378"/>
        <dbReference type="ChEBI" id="CHEBI:30616"/>
        <dbReference type="ChEBI" id="CHEBI:43474"/>
        <dbReference type="ChEBI" id="CHEBI:57416"/>
        <dbReference type="ChEBI" id="CHEBI:57822"/>
        <dbReference type="ChEBI" id="CHEBI:456216"/>
        <dbReference type="EC" id="6.3.2.4"/>
    </reaction>
</comment>
<comment type="cofactor">
    <cofactor evidence="1">
        <name>Mg(2+)</name>
        <dbReference type="ChEBI" id="CHEBI:18420"/>
    </cofactor>
    <cofactor evidence="1">
        <name>Mn(2+)</name>
        <dbReference type="ChEBI" id="CHEBI:29035"/>
    </cofactor>
    <text evidence="1">Binds 2 magnesium or manganese ions per subunit.</text>
</comment>
<comment type="pathway">
    <text evidence="2">Cell wall biogenesis; peptidoglycan biosynthesis.</text>
</comment>
<comment type="subcellular location">
    <subcellularLocation>
        <location evidence="2">Cytoplasm</location>
    </subcellularLocation>
</comment>
<comment type="similarity">
    <text evidence="2">Belongs to the D-alanine--D-alanine ligase family.</text>
</comment>
<reference key="1">
    <citation type="submission" date="2007-05" db="EMBL/GenBank/DDBJ databases">
        <title>Complete sequence of chromosome of Acidiphilium cryptum JF-5.</title>
        <authorList>
            <consortium name="US DOE Joint Genome Institute"/>
            <person name="Copeland A."/>
            <person name="Lucas S."/>
            <person name="Lapidus A."/>
            <person name="Barry K."/>
            <person name="Detter J.C."/>
            <person name="Glavina del Rio T."/>
            <person name="Hammon N."/>
            <person name="Israni S."/>
            <person name="Dalin E."/>
            <person name="Tice H."/>
            <person name="Pitluck S."/>
            <person name="Sims D."/>
            <person name="Brettin T."/>
            <person name="Bruce D."/>
            <person name="Han C."/>
            <person name="Schmutz J."/>
            <person name="Larimer F."/>
            <person name="Land M."/>
            <person name="Hauser L."/>
            <person name="Kyrpides N."/>
            <person name="Kim E."/>
            <person name="Magnuson T."/>
            <person name="Richardson P."/>
        </authorList>
    </citation>
    <scope>NUCLEOTIDE SEQUENCE [LARGE SCALE GENOMIC DNA]</scope>
    <source>
        <strain>JF-5</strain>
    </source>
</reference>
<proteinExistence type="inferred from homology"/>
<protein>
    <recommendedName>
        <fullName evidence="2">D-alanine--D-alanine ligase</fullName>
        <ecNumber evidence="2">6.3.2.4</ecNumber>
    </recommendedName>
    <alternativeName>
        <fullName evidence="2">D-Ala-D-Ala ligase</fullName>
    </alternativeName>
    <alternativeName>
        <fullName evidence="2">D-alanylalanine synthetase</fullName>
    </alternativeName>
</protein>
<sequence>MKRVAVLLGGISEEREVSLASGRQVAAALRKAGYDVFEIEVGADLGAVIAALTPAPDAVFNALHGRFGEDGTIQGVLDYMGIPYTHSGVRASSMAMDKGAAKAVFAAAGLPLAQHRIVPLDELAEADPLPRPYVIKPVNEGSSVGVFILREGDNRRADIARAWRHGSVAMTEEYVPGRELTVSVLEDRALAVTEIRAEGFYDYTAKYAAGASRHEIPADVPPSVSARARDVAVAAHRALGCRGATRSDFRYDDETDRLVLLEVNTQPGMTPTSLLPEQAAHCGIDFPALCAWMVENAACRV</sequence>
<feature type="chain" id="PRO_0000341043" description="D-alanine--D-alanine ligase">
    <location>
        <begin position="1"/>
        <end position="301"/>
    </location>
</feature>
<feature type="domain" description="ATP-grasp" evidence="2">
    <location>
        <begin position="102"/>
        <end position="295"/>
    </location>
</feature>
<feature type="binding site" evidence="2">
    <location>
        <begin position="128"/>
        <end position="181"/>
    </location>
    <ligand>
        <name>ATP</name>
        <dbReference type="ChEBI" id="CHEBI:30616"/>
    </ligand>
</feature>
<feature type="binding site" evidence="2">
    <location>
        <position position="248"/>
    </location>
    <ligand>
        <name>Mg(2+)</name>
        <dbReference type="ChEBI" id="CHEBI:18420"/>
        <label>1</label>
    </ligand>
</feature>
<feature type="binding site" evidence="2">
    <location>
        <position position="262"/>
    </location>
    <ligand>
        <name>Mg(2+)</name>
        <dbReference type="ChEBI" id="CHEBI:18420"/>
        <label>1</label>
    </ligand>
</feature>
<feature type="binding site" evidence="2">
    <location>
        <position position="262"/>
    </location>
    <ligand>
        <name>Mg(2+)</name>
        <dbReference type="ChEBI" id="CHEBI:18420"/>
        <label>2</label>
    </ligand>
</feature>
<feature type="binding site" evidence="2">
    <location>
        <position position="264"/>
    </location>
    <ligand>
        <name>Mg(2+)</name>
        <dbReference type="ChEBI" id="CHEBI:18420"/>
        <label>2</label>
    </ligand>
</feature>
<evidence type="ECO:0000250" key="1"/>
<evidence type="ECO:0000255" key="2">
    <source>
        <dbReference type="HAMAP-Rule" id="MF_00047"/>
    </source>
</evidence>
<dbReference type="EC" id="6.3.2.4" evidence="2"/>
<dbReference type="EMBL" id="CP000697">
    <property type="protein sequence ID" value="ABQ29295.1"/>
    <property type="molecule type" value="Genomic_DNA"/>
</dbReference>
<dbReference type="RefSeq" id="WP_011941251.1">
    <property type="nucleotide sequence ID" value="NC_009484.1"/>
</dbReference>
<dbReference type="SMR" id="A5FUL3"/>
<dbReference type="STRING" id="349163.Acry_0066"/>
<dbReference type="KEGG" id="acr:Acry_0066"/>
<dbReference type="eggNOG" id="COG1181">
    <property type="taxonomic scope" value="Bacteria"/>
</dbReference>
<dbReference type="HOGENOM" id="CLU_039268_1_1_5"/>
<dbReference type="UniPathway" id="UPA00219"/>
<dbReference type="Proteomes" id="UP000000245">
    <property type="component" value="Chromosome"/>
</dbReference>
<dbReference type="GO" id="GO:0005737">
    <property type="term" value="C:cytoplasm"/>
    <property type="evidence" value="ECO:0007669"/>
    <property type="project" value="UniProtKB-SubCell"/>
</dbReference>
<dbReference type="GO" id="GO:0005524">
    <property type="term" value="F:ATP binding"/>
    <property type="evidence" value="ECO:0007669"/>
    <property type="project" value="UniProtKB-KW"/>
</dbReference>
<dbReference type="GO" id="GO:0008716">
    <property type="term" value="F:D-alanine-D-alanine ligase activity"/>
    <property type="evidence" value="ECO:0007669"/>
    <property type="project" value="UniProtKB-UniRule"/>
</dbReference>
<dbReference type="GO" id="GO:0046872">
    <property type="term" value="F:metal ion binding"/>
    <property type="evidence" value="ECO:0007669"/>
    <property type="project" value="UniProtKB-KW"/>
</dbReference>
<dbReference type="GO" id="GO:0071555">
    <property type="term" value="P:cell wall organization"/>
    <property type="evidence" value="ECO:0007669"/>
    <property type="project" value="UniProtKB-KW"/>
</dbReference>
<dbReference type="GO" id="GO:0009252">
    <property type="term" value="P:peptidoglycan biosynthetic process"/>
    <property type="evidence" value="ECO:0007669"/>
    <property type="project" value="UniProtKB-UniRule"/>
</dbReference>
<dbReference type="GO" id="GO:0008360">
    <property type="term" value="P:regulation of cell shape"/>
    <property type="evidence" value="ECO:0007669"/>
    <property type="project" value="UniProtKB-KW"/>
</dbReference>
<dbReference type="Gene3D" id="3.40.50.20">
    <property type="match status" value="1"/>
</dbReference>
<dbReference type="Gene3D" id="3.30.1490.20">
    <property type="entry name" value="ATP-grasp fold, A domain"/>
    <property type="match status" value="1"/>
</dbReference>
<dbReference type="Gene3D" id="3.30.470.20">
    <property type="entry name" value="ATP-grasp fold, B domain"/>
    <property type="match status" value="1"/>
</dbReference>
<dbReference type="HAMAP" id="MF_00047">
    <property type="entry name" value="Dala_Dala_lig"/>
    <property type="match status" value="1"/>
</dbReference>
<dbReference type="InterPro" id="IPR011761">
    <property type="entry name" value="ATP-grasp"/>
</dbReference>
<dbReference type="InterPro" id="IPR013815">
    <property type="entry name" value="ATP_grasp_subdomain_1"/>
</dbReference>
<dbReference type="InterPro" id="IPR000291">
    <property type="entry name" value="D-Ala_lig_Van_CS"/>
</dbReference>
<dbReference type="InterPro" id="IPR005905">
    <property type="entry name" value="D_ala_D_ala"/>
</dbReference>
<dbReference type="InterPro" id="IPR011095">
    <property type="entry name" value="Dala_Dala_lig_C"/>
</dbReference>
<dbReference type="InterPro" id="IPR011127">
    <property type="entry name" value="Dala_Dala_lig_N"/>
</dbReference>
<dbReference type="InterPro" id="IPR016185">
    <property type="entry name" value="PreATP-grasp_dom_sf"/>
</dbReference>
<dbReference type="NCBIfam" id="TIGR01205">
    <property type="entry name" value="D_ala_D_alaTIGR"/>
    <property type="match status" value="1"/>
</dbReference>
<dbReference type="NCBIfam" id="NF002378">
    <property type="entry name" value="PRK01372.1"/>
    <property type="match status" value="1"/>
</dbReference>
<dbReference type="PANTHER" id="PTHR23132">
    <property type="entry name" value="D-ALANINE--D-ALANINE LIGASE"/>
    <property type="match status" value="1"/>
</dbReference>
<dbReference type="PANTHER" id="PTHR23132:SF23">
    <property type="entry name" value="D-ALANINE--D-ALANINE LIGASE B"/>
    <property type="match status" value="1"/>
</dbReference>
<dbReference type="Pfam" id="PF07478">
    <property type="entry name" value="Dala_Dala_lig_C"/>
    <property type="match status" value="1"/>
</dbReference>
<dbReference type="Pfam" id="PF01820">
    <property type="entry name" value="Dala_Dala_lig_N"/>
    <property type="match status" value="1"/>
</dbReference>
<dbReference type="PIRSF" id="PIRSF039102">
    <property type="entry name" value="Ddl/VanB"/>
    <property type="match status" value="1"/>
</dbReference>
<dbReference type="SUPFAM" id="SSF56059">
    <property type="entry name" value="Glutathione synthetase ATP-binding domain-like"/>
    <property type="match status" value="1"/>
</dbReference>
<dbReference type="SUPFAM" id="SSF52440">
    <property type="entry name" value="PreATP-grasp domain"/>
    <property type="match status" value="1"/>
</dbReference>
<dbReference type="PROSITE" id="PS50975">
    <property type="entry name" value="ATP_GRASP"/>
    <property type="match status" value="1"/>
</dbReference>
<dbReference type="PROSITE" id="PS00843">
    <property type="entry name" value="DALA_DALA_LIGASE_1"/>
    <property type="match status" value="1"/>
</dbReference>
<dbReference type="PROSITE" id="PS00844">
    <property type="entry name" value="DALA_DALA_LIGASE_2"/>
    <property type="match status" value="1"/>
</dbReference>